<protein>
    <recommendedName>
        <fullName evidence="1">Probable nicotinate-nucleotide adenylyltransferase</fullName>
        <ecNumber evidence="1">2.7.7.18</ecNumber>
    </recommendedName>
    <alternativeName>
        <fullName evidence="1">Deamido-NAD(+) diphosphorylase</fullName>
    </alternativeName>
    <alternativeName>
        <fullName evidence="1">Deamido-NAD(+) pyrophosphorylase</fullName>
    </alternativeName>
    <alternativeName>
        <fullName evidence="1">Nicotinate mononucleotide adenylyltransferase</fullName>
        <shortName evidence="1">NaMN adenylyltransferase</shortName>
    </alternativeName>
</protein>
<organism>
    <name type="scientific">Citrobacter koseri (strain ATCC BAA-895 / CDC 4225-83 / SGSC4696)</name>
    <dbReference type="NCBI Taxonomy" id="290338"/>
    <lineage>
        <taxon>Bacteria</taxon>
        <taxon>Pseudomonadati</taxon>
        <taxon>Pseudomonadota</taxon>
        <taxon>Gammaproteobacteria</taxon>
        <taxon>Enterobacterales</taxon>
        <taxon>Enterobacteriaceae</taxon>
        <taxon>Citrobacter</taxon>
    </lineage>
</organism>
<sequence>MKSLQALFGGTFDPVHYGHLKPVETLANLIGLSRVIIMPNNVPPHRPQPEASSAQRKYMLELAIADKPLFILDERELKRDTASYTAQTLKEWREEQGPDAPLAFIIGQDSLLTFPTWHDYETILDNTHLIVCRRPGYPLEMVKEQHQQWLERHLTHTPDDLHALPAGKIYLAETPWFNISATLIRERLEKGEPCDDLMPESVLNYINQQGLYR</sequence>
<gene>
    <name evidence="1" type="primary">nadD</name>
    <name type="ordered locus">CKO_02517</name>
</gene>
<evidence type="ECO:0000255" key="1">
    <source>
        <dbReference type="HAMAP-Rule" id="MF_00244"/>
    </source>
</evidence>
<evidence type="ECO:0000305" key="2"/>
<feature type="chain" id="PRO_0000336683" description="Probable nicotinate-nucleotide adenylyltransferase">
    <location>
        <begin position="1"/>
        <end position="213"/>
    </location>
</feature>
<proteinExistence type="inferred from homology"/>
<name>NADD_CITK8</name>
<reference key="1">
    <citation type="submission" date="2007-08" db="EMBL/GenBank/DDBJ databases">
        <authorList>
            <consortium name="The Citrobacter koseri Genome Sequencing Project"/>
            <person name="McClelland M."/>
            <person name="Sanderson E.K."/>
            <person name="Porwollik S."/>
            <person name="Spieth J."/>
            <person name="Clifton W.S."/>
            <person name="Latreille P."/>
            <person name="Courtney L."/>
            <person name="Wang C."/>
            <person name="Pepin K."/>
            <person name="Bhonagiri V."/>
            <person name="Nash W."/>
            <person name="Johnson M."/>
            <person name="Thiruvilangam P."/>
            <person name="Wilson R."/>
        </authorList>
    </citation>
    <scope>NUCLEOTIDE SEQUENCE [LARGE SCALE GENOMIC DNA]</scope>
    <source>
        <strain>ATCC BAA-895 / CDC 4225-83 / SGSC4696</strain>
    </source>
</reference>
<comment type="function">
    <text evidence="1">Catalyzes the reversible adenylation of nicotinate mononucleotide (NaMN) to nicotinic acid adenine dinucleotide (NaAD).</text>
</comment>
<comment type="catalytic activity">
    <reaction evidence="1">
        <text>nicotinate beta-D-ribonucleotide + ATP + H(+) = deamido-NAD(+) + diphosphate</text>
        <dbReference type="Rhea" id="RHEA:22860"/>
        <dbReference type="ChEBI" id="CHEBI:15378"/>
        <dbReference type="ChEBI" id="CHEBI:30616"/>
        <dbReference type="ChEBI" id="CHEBI:33019"/>
        <dbReference type="ChEBI" id="CHEBI:57502"/>
        <dbReference type="ChEBI" id="CHEBI:58437"/>
        <dbReference type="EC" id="2.7.7.18"/>
    </reaction>
</comment>
<comment type="pathway">
    <text evidence="1">Cofactor biosynthesis; NAD(+) biosynthesis; deamido-NAD(+) from nicotinate D-ribonucleotide: step 1/1.</text>
</comment>
<comment type="similarity">
    <text evidence="1">Belongs to the NadD family.</text>
</comment>
<comment type="sequence caution" evidence="2">
    <conflict type="erroneous initiation">
        <sequence resource="EMBL-CDS" id="ABV13626"/>
    </conflict>
</comment>
<accession>A8AJG3</accession>
<keyword id="KW-0067">ATP-binding</keyword>
<keyword id="KW-0520">NAD</keyword>
<keyword id="KW-0547">Nucleotide-binding</keyword>
<keyword id="KW-0548">Nucleotidyltransferase</keyword>
<keyword id="KW-0662">Pyridine nucleotide biosynthesis</keyword>
<keyword id="KW-1185">Reference proteome</keyword>
<keyword id="KW-0808">Transferase</keyword>
<dbReference type="EC" id="2.7.7.18" evidence="1"/>
<dbReference type="EMBL" id="CP000822">
    <property type="protein sequence ID" value="ABV13626.1"/>
    <property type="status" value="ALT_INIT"/>
    <property type="molecule type" value="Genomic_DNA"/>
</dbReference>
<dbReference type="SMR" id="A8AJG3"/>
<dbReference type="STRING" id="290338.CKO_02517"/>
<dbReference type="KEGG" id="cko:CKO_02517"/>
<dbReference type="HOGENOM" id="CLU_069765_0_0_6"/>
<dbReference type="OrthoDB" id="5295945at2"/>
<dbReference type="UniPathway" id="UPA00253">
    <property type="reaction ID" value="UER00332"/>
</dbReference>
<dbReference type="Proteomes" id="UP000008148">
    <property type="component" value="Chromosome"/>
</dbReference>
<dbReference type="GO" id="GO:0005524">
    <property type="term" value="F:ATP binding"/>
    <property type="evidence" value="ECO:0007669"/>
    <property type="project" value="UniProtKB-KW"/>
</dbReference>
<dbReference type="GO" id="GO:0004515">
    <property type="term" value="F:nicotinate-nucleotide adenylyltransferase activity"/>
    <property type="evidence" value="ECO:0007669"/>
    <property type="project" value="UniProtKB-UniRule"/>
</dbReference>
<dbReference type="GO" id="GO:0009435">
    <property type="term" value="P:NAD biosynthetic process"/>
    <property type="evidence" value="ECO:0007669"/>
    <property type="project" value="UniProtKB-UniRule"/>
</dbReference>
<dbReference type="CDD" id="cd02165">
    <property type="entry name" value="NMNAT"/>
    <property type="match status" value="1"/>
</dbReference>
<dbReference type="FunFam" id="3.40.50.620:FF:000039">
    <property type="entry name" value="Probable nicotinate-nucleotide adenylyltransferase"/>
    <property type="match status" value="1"/>
</dbReference>
<dbReference type="Gene3D" id="3.40.50.620">
    <property type="entry name" value="HUPs"/>
    <property type="match status" value="1"/>
</dbReference>
<dbReference type="HAMAP" id="MF_00244">
    <property type="entry name" value="NaMN_adenylyltr"/>
    <property type="match status" value="1"/>
</dbReference>
<dbReference type="InterPro" id="IPR004821">
    <property type="entry name" value="Cyt_trans-like"/>
</dbReference>
<dbReference type="InterPro" id="IPR005248">
    <property type="entry name" value="NadD/NMNAT"/>
</dbReference>
<dbReference type="InterPro" id="IPR014729">
    <property type="entry name" value="Rossmann-like_a/b/a_fold"/>
</dbReference>
<dbReference type="NCBIfam" id="TIGR00125">
    <property type="entry name" value="cyt_tran_rel"/>
    <property type="match status" value="1"/>
</dbReference>
<dbReference type="NCBIfam" id="TIGR00482">
    <property type="entry name" value="nicotinate (nicotinamide) nucleotide adenylyltransferase"/>
    <property type="match status" value="1"/>
</dbReference>
<dbReference type="NCBIfam" id="NF000839">
    <property type="entry name" value="PRK00071.1-1"/>
    <property type="match status" value="1"/>
</dbReference>
<dbReference type="NCBIfam" id="NF000840">
    <property type="entry name" value="PRK00071.1-3"/>
    <property type="match status" value="1"/>
</dbReference>
<dbReference type="PANTHER" id="PTHR39321">
    <property type="entry name" value="NICOTINATE-NUCLEOTIDE ADENYLYLTRANSFERASE-RELATED"/>
    <property type="match status" value="1"/>
</dbReference>
<dbReference type="PANTHER" id="PTHR39321:SF3">
    <property type="entry name" value="PHOSPHOPANTETHEINE ADENYLYLTRANSFERASE"/>
    <property type="match status" value="1"/>
</dbReference>
<dbReference type="Pfam" id="PF01467">
    <property type="entry name" value="CTP_transf_like"/>
    <property type="match status" value="1"/>
</dbReference>
<dbReference type="SUPFAM" id="SSF52374">
    <property type="entry name" value="Nucleotidylyl transferase"/>
    <property type="match status" value="1"/>
</dbReference>